<keyword id="KW-0963">Cytoplasm</keyword>
<keyword id="KW-0444">Lipid biosynthesis</keyword>
<keyword id="KW-0443">Lipid metabolism</keyword>
<keyword id="KW-0520">NAD</keyword>
<keyword id="KW-0521">NADP</keyword>
<keyword id="KW-0547">Nucleotide-binding</keyword>
<keyword id="KW-0560">Oxidoreductase</keyword>
<keyword id="KW-0594">Phospholipid biosynthesis</keyword>
<keyword id="KW-1208">Phospholipid metabolism</keyword>
<sequence>MRVAVLGAGAWGTALAVLLASKGVPTRLWARRKAQAEALKAMRENRDYLPGVALPAYLYPTHDPEEALEGAELAVLAVPSKALRETVAGLPPAPWYVSATKGLFYGEEGVRTPAEVVEALTQRPVVALSGPNHAEEVARFLPTASVAAGPEDLARRVQALFSGPTFRVYTSRDRRGVELGGAVKNVLALAAGMVDGLRLGDNAKAALLTRGLKEMVRFGTALGGEEATFYGLAGLGDLLATAYSLHSRNRMAGESLVRGVDREALEARGVVEGLYAVKAMVAWGKEQGVELPVAEAVHRVAHEGLDPLAALKALMAREPKEE</sequence>
<protein>
    <recommendedName>
        <fullName evidence="1">Glycerol-3-phosphate dehydrogenase [NAD(P)+]</fullName>
        <ecNumber evidence="1">1.1.1.94</ecNumber>
    </recommendedName>
    <alternativeName>
        <fullName evidence="1">NAD(P)(+)-dependent glycerol-3-phosphate dehydrogenase</fullName>
    </alternativeName>
    <alternativeName>
        <fullName evidence="1">NAD(P)H-dependent dihydroxyacetone-phosphate reductase</fullName>
    </alternativeName>
</protein>
<gene>
    <name evidence="1" type="primary">gpsA</name>
    <name type="ordered locus">TT_C1378</name>
</gene>
<comment type="function">
    <text evidence="1">Catalyzes the reduction of the glycolytic intermediate dihydroxyacetone phosphate (DHAP) to sn-glycerol 3-phosphate (G3P), the key precursor for phospholipid synthesis.</text>
</comment>
<comment type="catalytic activity">
    <reaction evidence="1">
        <text>sn-glycerol 3-phosphate + NAD(+) = dihydroxyacetone phosphate + NADH + H(+)</text>
        <dbReference type="Rhea" id="RHEA:11092"/>
        <dbReference type="ChEBI" id="CHEBI:15378"/>
        <dbReference type="ChEBI" id="CHEBI:57540"/>
        <dbReference type="ChEBI" id="CHEBI:57597"/>
        <dbReference type="ChEBI" id="CHEBI:57642"/>
        <dbReference type="ChEBI" id="CHEBI:57945"/>
        <dbReference type="EC" id="1.1.1.94"/>
    </reaction>
    <physiologicalReaction direction="right-to-left" evidence="1">
        <dbReference type="Rhea" id="RHEA:11094"/>
    </physiologicalReaction>
</comment>
<comment type="catalytic activity">
    <reaction evidence="1">
        <text>sn-glycerol 3-phosphate + NADP(+) = dihydroxyacetone phosphate + NADPH + H(+)</text>
        <dbReference type="Rhea" id="RHEA:11096"/>
        <dbReference type="ChEBI" id="CHEBI:15378"/>
        <dbReference type="ChEBI" id="CHEBI:57597"/>
        <dbReference type="ChEBI" id="CHEBI:57642"/>
        <dbReference type="ChEBI" id="CHEBI:57783"/>
        <dbReference type="ChEBI" id="CHEBI:58349"/>
        <dbReference type="EC" id="1.1.1.94"/>
    </reaction>
    <physiologicalReaction direction="right-to-left" evidence="1">
        <dbReference type="Rhea" id="RHEA:11098"/>
    </physiologicalReaction>
</comment>
<comment type="pathway">
    <text evidence="1">Membrane lipid metabolism; glycerophospholipid metabolism.</text>
</comment>
<comment type="subcellular location">
    <subcellularLocation>
        <location evidence="1">Cytoplasm</location>
    </subcellularLocation>
</comment>
<comment type="similarity">
    <text evidence="1">Belongs to the NAD-dependent glycerol-3-phosphate dehydrogenase family.</text>
</comment>
<dbReference type="EC" id="1.1.1.94" evidence="1"/>
<dbReference type="EMBL" id="AE017221">
    <property type="protein sequence ID" value="AAS81720.1"/>
    <property type="molecule type" value="Genomic_DNA"/>
</dbReference>
<dbReference type="RefSeq" id="WP_011173761.1">
    <property type="nucleotide sequence ID" value="NC_005835.1"/>
</dbReference>
<dbReference type="SMR" id="P61747"/>
<dbReference type="GeneID" id="3169739"/>
<dbReference type="KEGG" id="tth:TT_C1378"/>
<dbReference type="eggNOG" id="COG0240">
    <property type="taxonomic scope" value="Bacteria"/>
</dbReference>
<dbReference type="HOGENOM" id="CLU_033449_0_2_0"/>
<dbReference type="OrthoDB" id="9812273at2"/>
<dbReference type="UniPathway" id="UPA00940"/>
<dbReference type="Proteomes" id="UP000000592">
    <property type="component" value="Chromosome"/>
</dbReference>
<dbReference type="GO" id="GO:0005829">
    <property type="term" value="C:cytosol"/>
    <property type="evidence" value="ECO:0007669"/>
    <property type="project" value="TreeGrafter"/>
</dbReference>
<dbReference type="GO" id="GO:0047952">
    <property type="term" value="F:glycerol-3-phosphate dehydrogenase [NAD(P)+] activity"/>
    <property type="evidence" value="ECO:0007669"/>
    <property type="project" value="UniProtKB-UniRule"/>
</dbReference>
<dbReference type="GO" id="GO:0051287">
    <property type="term" value="F:NAD binding"/>
    <property type="evidence" value="ECO:0007669"/>
    <property type="project" value="InterPro"/>
</dbReference>
<dbReference type="GO" id="GO:0005975">
    <property type="term" value="P:carbohydrate metabolic process"/>
    <property type="evidence" value="ECO:0007669"/>
    <property type="project" value="InterPro"/>
</dbReference>
<dbReference type="GO" id="GO:0046167">
    <property type="term" value="P:glycerol-3-phosphate biosynthetic process"/>
    <property type="evidence" value="ECO:0007669"/>
    <property type="project" value="UniProtKB-UniRule"/>
</dbReference>
<dbReference type="GO" id="GO:0046168">
    <property type="term" value="P:glycerol-3-phosphate catabolic process"/>
    <property type="evidence" value="ECO:0007669"/>
    <property type="project" value="InterPro"/>
</dbReference>
<dbReference type="GO" id="GO:0006650">
    <property type="term" value="P:glycerophospholipid metabolic process"/>
    <property type="evidence" value="ECO:0007669"/>
    <property type="project" value="UniProtKB-UniRule"/>
</dbReference>
<dbReference type="GO" id="GO:0008654">
    <property type="term" value="P:phospholipid biosynthetic process"/>
    <property type="evidence" value="ECO:0007669"/>
    <property type="project" value="UniProtKB-KW"/>
</dbReference>
<dbReference type="FunFam" id="1.10.1040.10:FF:000001">
    <property type="entry name" value="Glycerol-3-phosphate dehydrogenase [NAD(P)+]"/>
    <property type="match status" value="1"/>
</dbReference>
<dbReference type="FunFam" id="3.40.50.720:FF:000019">
    <property type="entry name" value="Glycerol-3-phosphate dehydrogenase [NAD(P)+]"/>
    <property type="match status" value="1"/>
</dbReference>
<dbReference type="Gene3D" id="1.10.1040.10">
    <property type="entry name" value="N-(1-d-carboxylethyl)-l-norvaline Dehydrogenase, domain 2"/>
    <property type="match status" value="1"/>
</dbReference>
<dbReference type="Gene3D" id="3.40.50.720">
    <property type="entry name" value="NAD(P)-binding Rossmann-like Domain"/>
    <property type="match status" value="1"/>
</dbReference>
<dbReference type="HAMAP" id="MF_00394">
    <property type="entry name" value="NAD_Glyc3P_dehydrog"/>
    <property type="match status" value="1"/>
</dbReference>
<dbReference type="InterPro" id="IPR008927">
    <property type="entry name" value="6-PGluconate_DH-like_C_sf"/>
</dbReference>
<dbReference type="InterPro" id="IPR013328">
    <property type="entry name" value="6PGD_dom2"/>
</dbReference>
<dbReference type="InterPro" id="IPR006168">
    <property type="entry name" value="G3P_DH_NAD-dep"/>
</dbReference>
<dbReference type="InterPro" id="IPR006109">
    <property type="entry name" value="G3P_DH_NAD-dep_C"/>
</dbReference>
<dbReference type="InterPro" id="IPR011128">
    <property type="entry name" value="G3P_DH_NAD-dep_N"/>
</dbReference>
<dbReference type="InterPro" id="IPR036291">
    <property type="entry name" value="NAD(P)-bd_dom_sf"/>
</dbReference>
<dbReference type="NCBIfam" id="NF000940">
    <property type="entry name" value="PRK00094.1-2"/>
    <property type="match status" value="1"/>
</dbReference>
<dbReference type="NCBIfam" id="NF000942">
    <property type="entry name" value="PRK00094.1-4"/>
    <property type="match status" value="1"/>
</dbReference>
<dbReference type="NCBIfam" id="NF011211">
    <property type="entry name" value="PRK14618.1"/>
    <property type="match status" value="1"/>
</dbReference>
<dbReference type="PANTHER" id="PTHR11728">
    <property type="entry name" value="GLYCEROL-3-PHOSPHATE DEHYDROGENASE"/>
    <property type="match status" value="1"/>
</dbReference>
<dbReference type="PANTHER" id="PTHR11728:SF1">
    <property type="entry name" value="GLYCEROL-3-PHOSPHATE DEHYDROGENASE [NAD(+)] 2, CHLOROPLASTIC"/>
    <property type="match status" value="1"/>
</dbReference>
<dbReference type="Pfam" id="PF07479">
    <property type="entry name" value="NAD_Gly3P_dh_C"/>
    <property type="match status" value="1"/>
</dbReference>
<dbReference type="Pfam" id="PF01210">
    <property type="entry name" value="NAD_Gly3P_dh_N"/>
    <property type="match status" value="1"/>
</dbReference>
<dbReference type="PIRSF" id="PIRSF000114">
    <property type="entry name" value="Glycerol-3-P_dh"/>
    <property type="match status" value="1"/>
</dbReference>
<dbReference type="PRINTS" id="PR00077">
    <property type="entry name" value="GPDHDRGNASE"/>
</dbReference>
<dbReference type="SUPFAM" id="SSF48179">
    <property type="entry name" value="6-phosphogluconate dehydrogenase C-terminal domain-like"/>
    <property type="match status" value="1"/>
</dbReference>
<dbReference type="SUPFAM" id="SSF51735">
    <property type="entry name" value="NAD(P)-binding Rossmann-fold domains"/>
    <property type="match status" value="1"/>
</dbReference>
<dbReference type="PROSITE" id="PS00957">
    <property type="entry name" value="NAD_G3PDH"/>
    <property type="match status" value="1"/>
</dbReference>
<accession>P61747</accession>
<organism>
    <name type="scientific">Thermus thermophilus (strain ATCC BAA-163 / DSM 7039 / HB27)</name>
    <dbReference type="NCBI Taxonomy" id="262724"/>
    <lineage>
        <taxon>Bacteria</taxon>
        <taxon>Thermotogati</taxon>
        <taxon>Deinococcota</taxon>
        <taxon>Deinococci</taxon>
        <taxon>Thermales</taxon>
        <taxon>Thermaceae</taxon>
        <taxon>Thermus</taxon>
    </lineage>
</organism>
<proteinExistence type="inferred from homology"/>
<evidence type="ECO:0000255" key="1">
    <source>
        <dbReference type="HAMAP-Rule" id="MF_00394"/>
    </source>
</evidence>
<feature type="chain" id="PRO_0000138048" description="Glycerol-3-phosphate dehydrogenase [NAD(P)+]">
    <location>
        <begin position="1"/>
        <end position="322"/>
    </location>
</feature>
<feature type="active site" description="Proton acceptor" evidence="1">
    <location>
        <position position="184"/>
    </location>
</feature>
<feature type="binding site" evidence="1">
    <location>
        <position position="11"/>
    </location>
    <ligand>
        <name>NADPH</name>
        <dbReference type="ChEBI" id="CHEBI:57783"/>
    </ligand>
</feature>
<feature type="binding site" evidence="1">
    <location>
        <position position="31"/>
    </location>
    <ligand>
        <name>NADPH</name>
        <dbReference type="ChEBI" id="CHEBI:57783"/>
    </ligand>
</feature>
<feature type="binding site" evidence="1">
    <location>
        <position position="32"/>
    </location>
    <ligand>
        <name>NADPH</name>
        <dbReference type="ChEBI" id="CHEBI:57783"/>
    </ligand>
</feature>
<feature type="binding site" evidence="1">
    <location>
        <position position="101"/>
    </location>
    <ligand>
        <name>NADPH</name>
        <dbReference type="ChEBI" id="CHEBI:57783"/>
    </ligand>
</feature>
<feature type="binding site" evidence="1">
    <location>
        <position position="101"/>
    </location>
    <ligand>
        <name>sn-glycerol 3-phosphate</name>
        <dbReference type="ChEBI" id="CHEBI:57597"/>
    </ligand>
</feature>
<feature type="binding site" evidence="1">
    <location>
        <position position="130"/>
    </location>
    <ligand>
        <name>sn-glycerol 3-phosphate</name>
        <dbReference type="ChEBI" id="CHEBI:57597"/>
    </ligand>
</feature>
<feature type="binding site" evidence="1">
    <location>
        <position position="134"/>
    </location>
    <ligand>
        <name>NADPH</name>
        <dbReference type="ChEBI" id="CHEBI:57783"/>
    </ligand>
</feature>
<feature type="binding site" evidence="1">
    <location>
        <position position="184"/>
    </location>
    <ligand>
        <name>sn-glycerol 3-phosphate</name>
        <dbReference type="ChEBI" id="CHEBI:57597"/>
    </ligand>
</feature>
<feature type="binding site" evidence="1">
    <location>
        <position position="237"/>
    </location>
    <ligand>
        <name>sn-glycerol 3-phosphate</name>
        <dbReference type="ChEBI" id="CHEBI:57597"/>
    </ligand>
</feature>
<feature type="binding site" evidence="1">
    <location>
        <position position="247"/>
    </location>
    <ligand>
        <name>sn-glycerol 3-phosphate</name>
        <dbReference type="ChEBI" id="CHEBI:57597"/>
    </ligand>
</feature>
<feature type="binding site" evidence="1">
    <location>
        <position position="248"/>
    </location>
    <ligand>
        <name>NADPH</name>
        <dbReference type="ChEBI" id="CHEBI:57783"/>
    </ligand>
</feature>
<feature type="binding site" evidence="1">
    <location>
        <position position="248"/>
    </location>
    <ligand>
        <name>sn-glycerol 3-phosphate</name>
        <dbReference type="ChEBI" id="CHEBI:57597"/>
    </ligand>
</feature>
<feature type="binding site" evidence="1">
    <location>
        <position position="249"/>
    </location>
    <ligand>
        <name>sn-glycerol 3-phosphate</name>
        <dbReference type="ChEBI" id="CHEBI:57597"/>
    </ligand>
</feature>
<feature type="binding site" evidence="1">
    <location>
        <position position="270"/>
    </location>
    <ligand>
        <name>NADPH</name>
        <dbReference type="ChEBI" id="CHEBI:57783"/>
    </ligand>
</feature>
<feature type="binding site" evidence="1">
    <location>
        <position position="272"/>
    </location>
    <ligand>
        <name>NADPH</name>
        <dbReference type="ChEBI" id="CHEBI:57783"/>
    </ligand>
</feature>
<name>GPDA_THET2</name>
<reference key="1">
    <citation type="journal article" date="2004" name="Nat. Biotechnol.">
        <title>The genome sequence of the extreme thermophile Thermus thermophilus.</title>
        <authorList>
            <person name="Henne A."/>
            <person name="Brueggemann H."/>
            <person name="Raasch C."/>
            <person name="Wiezer A."/>
            <person name="Hartsch T."/>
            <person name="Liesegang H."/>
            <person name="Johann A."/>
            <person name="Lienard T."/>
            <person name="Gohl O."/>
            <person name="Martinez-Arias R."/>
            <person name="Jacobi C."/>
            <person name="Starkuviene V."/>
            <person name="Schlenczeck S."/>
            <person name="Dencker S."/>
            <person name="Huber R."/>
            <person name="Klenk H.-P."/>
            <person name="Kramer W."/>
            <person name="Merkl R."/>
            <person name="Gottschalk G."/>
            <person name="Fritz H.-J."/>
        </authorList>
    </citation>
    <scope>NUCLEOTIDE SEQUENCE [LARGE SCALE GENOMIC DNA]</scope>
    <source>
        <strain>ATCC BAA-163 / DSM 7039 / HB27</strain>
    </source>
</reference>